<proteinExistence type="evidence at protein level"/>
<dbReference type="EMBL" id="CU329671">
    <property type="protein sequence ID" value="CAA18411.1"/>
    <property type="molecule type" value="Genomic_DNA"/>
</dbReference>
<dbReference type="EMBL" id="AB017604">
    <property type="protein sequence ID" value="BAA33368.1"/>
    <property type="molecule type" value="mRNA"/>
</dbReference>
<dbReference type="PIR" id="T39778">
    <property type="entry name" value="T39778"/>
</dbReference>
<dbReference type="PIR" id="T43419">
    <property type="entry name" value="T43419"/>
</dbReference>
<dbReference type="RefSeq" id="NP_593452.1">
    <property type="nucleotide sequence ID" value="NM_001018885.2"/>
</dbReference>
<dbReference type="RefSeq" id="NP_595738.1">
    <property type="nucleotide sequence ID" value="NM_001021636.2"/>
</dbReference>
<dbReference type="PDB" id="9AXT">
    <property type="method" value="EM"/>
    <property type="resolution" value="2.40 A"/>
    <property type="chains" value="AT=1-140"/>
</dbReference>
<dbReference type="PDB" id="9AXV">
    <property type="method" value="EM"/>
    <property type="resolution" value="2.40 A"/>
    <property type="chains" value="AT=1-140"/>
</dbReference>
<dbReference type="PDBsum" id="9AXT"/>
<dbReference type="PDBsum" id="9AXV"/>
<dbReference type="EMDB" id="EMD-43972"/>
<dbReference type="EMDB" id="EMD-43976"/>
<dbReference type="SMR" id="P0CT64"/>
<dbReference type="FunCoup" id="P0CT64">
    <property type="interactions" value="277"/>
</dbReference>
<dbReference type="STRING" id="284812.P0CT64"/>
<dbReference type="iPTMnet" id="P0CT64"/>
<dbReference type="PaxDb" id="4896-SPAC664.04c.1"/>
<dbReference type="EnsemblFungi" id="SPAC664.04c.1">
    <property type="protein sequence ID" value="SPAC664.04c.1:pep"/>
    <property type="gene ID" value="SPAC664.04c"/>
</dbReference>
<dbReference type="EnsemblFungi" id="SPBC18H10.14.1">
    <property type="protein sequence ID" value="SPBC18H10.14.1:pep"/>
    <property type="gene ID" value="SPBC18H10.14"/>
</dbReference>
<dbReference type="GeneID" id="2540812"/>
<dbReference type="GeneID" id="2543559"/>
<dbReference type="KEGG" id="spo:2540812"/>
<dbReference type="KEGG" id="spo:2543559"/>
<dbReference type="PomBase" id="SPBC18H10.14">
    <property type="gene designation" value="rps1601"/>
</dbReference>
<dbReference type="VEuPathDB" id="FungiDB:SPAC664.04c"/>
<dbReference type="VEuPathDB" id="FungiDB:SPBC18H10.14"/>
<dbReference type="eggNOG" id="KOG1753">
    <property type="taxonomic scope" value="Eukaryota"/>
</dbReference>
<dbReference type="InParanoid" id="P0CT64"/>
<dbReference type="OMA" id="WPIEMAR"/>
<dbReference type="PhylomeDB" id="P0CT64"/>
<dbReference type="Reactome" id="R-SPO-156827">
    <property type="pathway name" value="L13a-mediated translational silencing of Ceruloplasmin expression"/>
</dbReference>
<dbReference type="Reactome" id="R-SPO-1799339">
    <property type="pathway name" value="SRP-dependent cotranslational protein targeting to membrane"/>
</dbReference>
<dbReference type="Reactome" id="R-SPO-72649">
    <property type="pathway name" value="Translation initiation complex formation"/>
</dbReference>
<dbReference type="Reactome" id="R-SPO-72689">
    <property type="pathway name" value="Formation of a pool of free 40S subunits"/>
</dbReference>
<dbReference type="Reactome" id="R-SPO-72695">
    <property type="pathway name" value="Formation of the ternary complex, and subsequently, the 43S complex"/>
</dbReference>
<dbReference type="Reactome" id="R-SPO-72702">
    <property type="pathway name" value="Ribosomal scanning and start codon recognition"/>
</dbReference>
<dbReference type="Reactome" id="R-SPO-72706">
    <property type="pathway name" value="GTP hydrolysis and joining of the 60S ribosomal subunit"/>
</dbReference>
<dbReference type="Reactome" id="R-SPO-975956">
    <property type="pathway name" value="Nonsense Mediated Decay (NMD) independent of the Exon Junction Complex (EJC)"/>
</dbReference>
<dbReference type="Reactome" id="R-SPO-975957">
    <property type="pathway name" value="Nonsense Mediated Decay (NMD) enhanced by the Exon Junction Complex (EJC)"/>
</dbReference>
<dbReference type="PRO" id="PR:P0CT64"/>
<dbReference type="Proteomes" id="UP000002485">
    <property type="component" value="Chromosome II"/>
</dbReference>
<dbReference type="ExpressionAtlas" id="P0CT64">
    <property type="expression patterns" value="differential"/>
</dbReference>
<dbReference type="GO" id="GO:0022627">
    <property type="term" value="C:cytosolic small ribosomal subunit"/>
    <property type="evidence" value="ECO:0000269"/>
    <property type="project" value="PomBase"/>
</dbReference>
<dbReference type="GO" id="GO:0003723">
    <property type="term" value="F:RNA binding"/>
    <property type="evidence" value="ECO:0000318"/>
    <property type="project" value="GO_Central"/>
</dbReference>
<dbReference type="GO" id="GO:0003735">
    <property type="term" value="F:structural constituent of ribosome"/>
    <property type="evidence" value="ECO:0000318"/>
    <property type="project" value="GO_Central"/>
</dbReference>
<dbReference type="GO" id="GO:0002181">
    <property type="term" value="P:cytoplasmic translation"/>
    <property type="evidence" value="ECO:0000266"/>
    <property type="project" value="PomBase"/>
</dbReference>
<dbReference type="GO" id="GO:0000462">
    <property type="term" value="P:maturation of SSU-rRNA from tricistronic rRNA transcript (SSU-rRNA, 5.8S rRNA, LSU-rRNA)"/>
    <property type="evidence" value="ECO:0000318"/>
    <property type="project" value="GO_Central"/>
</dbReference>
<dbReference type="FunFam" id="3.30.230.10:FF:000007">
    <property type="entry name" value="40S ribosomal protein S16"/>
    <property type="match status" value="1"/>
</dbReference>
<dbReference type="Gene3D" id="3.30.230.10">
    <property type="match status" value="1"/>
</dbReference>
<dbReference type="InterPro" id="IPR020568">
    <property type="entry name" value="Ribosomal_Su5_D2-typ_SF"/>
</dbReference>
<dbReference type="InterPro" id="IPR000754">
    <property type="entry name" value="Ribosomal_uS9"/>
</dbReference>
<dbReference type="InterPro" id="IPR020574">
    <property type="entry name" value="Ribosomal_uS9_CS"/>
</dbReference>
<dbReference type="InterPro" id="IPR014721">
    <property type="entry name" value="Ribsml_uS5_D2-typ_fold_subgr"/>
</dbReference>
<dbReference type="NCBIfam" id="NF001749">
    <property type="entry name" value="PRK00474.1"/>
    <property type="match status" value="1"/>
</dbReference>
<dbReference type="PANTHER" id="PTHR21569:SF16">
    <property type="entry name" value="RIBOSOMAL PROTEIN S16"/>
    <property type="match status" value="1"/>
</dbReference>
<dbReference type="PANTHER" id="PTHR21569">
    <property type="entry name" value="RIBOSOMAL PROTEIN S9"/>
    <property type="match status" value="1"/>
</dbReference>
<dbReference type="Pfam" id="PF00380">
    <property type="entry name" value="Ribosomal_S9"/>
    <property type="match status" value="1"/>
</dbReference>
<dbReference type="SUPFAM" id="SSF54211">
    <property type="entry name" value="Ribosomal protein S5 domain 2-like"/>
    <property type="match status" value="1"/>
</dbReference>
<dbReference type="PROSITE" id="PS00360">
    <property type="entry name" value="RIBOSOMAL_S9"/>
    <property type="match status" value="1"/>
</dbReference>
<sequence>MQSVQCFGKKGNATAVAHCKVGKGLIKVNGAPLSLVQPEILRMKVYEPILVAGADKFAGVDIRVRVSGGGHVSQIYAIRQAISKAIVAYYQKFVDEHSKAELKKALITYDRTLLVADPRRMEPKKFGGHGARARQQKSYR</sequence>
<feature type="chain" id="PRO_0000111501" description="Small ribosomal subunit protein uS9A">
    <location>
        <begin position="1"/>
        <end position="140"/>
    </location>
</feature>
<evidence type="ECO:0000250" key="1">
    <source>
        <dbReference type="UniProtKB" id="P0CX51"/>
    </source>
</evidence>
<evidence type="ECO:0000305" key="2"/>
<reference key="1">
    <citation type="journal article" date="2002" name="Nature">
        <title>The genome sequence of Schizosaccharomyces pombe.</title>
        <authorList>
            <person name="Wood V."/>
            <person name="Gwilliam R."/>
            <person name="Rajandream M.A."/>
            <person name="Lyne M.H."/>
            <person name="Lyne R."/>
            <person name="Stewart A."/>
            <person name="Sgouros J.G."/>
            <person name="Peat N."/>
            <person name="Hayles J."/>
            <person name="Baker S.G."/>
            <person name="Basham D."/>
            <person name="Bowman S."/>
            <person name="Brooks K."/>
            <person name="Brown D."/>
            <person name="Brown S."/>
            <person name="Chillingworth T."/>
            <person name="Churcher C.M."/>
            <person name="Collins M."/>
            <person name="Connor R."/>
            <person name="Cronin A."/>
            <person name="Davis P."/>
            <person name="Feltwell T."/>
            <person name="Fraser A."/>
            <person name="Gentles S."/>
            <person name="Goble A."/>
            <person name="Hamlin N."/>
            <person name="Harris D.E."/>
            <person name="Hidalgo J."/>
            <person name="Hodgson G."/>
            <person name="Holroyd S."/>
            <person name="Hornsby T."/>
            <person name="Howarth S."/>
            <person name="Huckle E.J."/>
            <person name="Hunt S."/>
            <person name="Jagels K."/>
            <person name="James K.D."/>
            <person name="Jones L."/>
            <person name="Jones M."/>
            <person name="Leather S."/>
            <person name="McDonald S."/>
            <person name="McLean J."/>
            <person name="Mooney P."/>
            <person name="Moule S."/>
            <person name="Mungall K.L."/>
            <person name="Murphy L.D."/>
            <person name="Niblett D."/>
            <person name="Odell C."/>
            <person name="Oliver K."/>
            <person name="O'Neil S."/>
            <person name="Pearson D."/>
            <person name="Quail M.A."/>
            <person name="Rabbinowitsch E."/>
            <person name="Rutherford K.M."/>
            <person name="Rutter S."/>
            <person name="Saunders D."/>
            <person name="Seeger K."/>
            <person name="Sharp S."/>
            <person name="Skelton J."/>
            <person name="Simmonds M.N."/>
            <person name="Squares R."/>
            <person name="Squares S."/>
            <person name="Stevens K."/>
            <person name="Taylor K."/>
            <person name="Taylor R.G."/>
            <person name="Tivey A."/>
            <person name="Walsh S.V."/>
            <person name="Warren T."/>
            <person name="Whitehead S."/>
            <person name="Woodward J.R."/>
            <person name="Volckaert G."/>
            <person name="Aert R."/>
            <person name="Robben J."/>
            <person name="Grymonprez B."/>
            <person name="Weltjens I."/>
            <person name="Vanstreels E."/>
            <person name="Rieger M."/>
            <person name="Schaefer M."/>
            <person name="Mueller-Auer S."/>
            <person name="Gabel C."/>
            <person name="Fuchs M."/>
            <person name="Duesterhoeft A."/>
            <person name="Fritzc C."/>
            <person name="Holzer E."/>
            <person name="Moestl D."/>
            <person name="Hilbert H."/>
            <person name="Borzym K."/>
            <person name="Langer I."/>
            <person name="Beck A."/>
            <person name="Lehrach H."/>
            <person name="Reinhardt R."/>
            <person name="Pohl T.M."/>
            <person name="Eger P."/>
            <person name="Zimmermann W."/>
            <person name="Wedler H."/>
            <person name="Wambutt R."/>
            <person name="Purnelle B."/>
            <person name="Goffeau A."/>
            <person name="Cadieu E."/>
            <person name="Dreano S."/>
            <person name="Gloux S."/>
            <person name="Lelaure V."/>
            <person name="Mottier S."/>
            <person name="Galibert F."/>
            <person name="Aves S.J."/>
            <person name="Xiang Z."/>
            <person name="Hunt C."/>
            <person name="Moore K."/>
            <person name="Hurst S.M."/>
            <person name="Lucas M."/>
            <person name="Rochet M."/>
            <person name="Gaillardin C."/>
            <person name="Tallada V.A."/>
            <person name="Garzon A."/>
            <person name="Thode G."/>
            <person name="Daga R.R."/>
            <person name="Cruzado L."/>
            <person name="Jimenez J."/>
            <person name="Sanchez M."/>
            <person name="del Rey F."/>
            <person name="Benito J."/>
            <person name="Dominguez A."/>
            <person name="Revuelta J.L."/>
            <person name="Moreno S."/>
            <person name="Armstrong J."/>
            <person name="Forsburg S.L."/>
            <person name="Cerutti L."/>
            <person name="Lowe T."/>
            <person name="McCombie W.R."/>
            <person name="Paulsen I."/>
            <person name="Potashkin J."/>
            <person name="Shpakovski G.V."/>
            <person name="Ussery D."/>
            <person name="Barrell B.G."/>
            <person name="Nurse P."/>
        </authorList>
    </citation>
    <scope>NUCLEOTIDE SEQUENCE [LARGE SCALE GENOMIC DNA]</scope>
    <source>
        <strain>972 / ATCC 24843</strain>
    </source>
</reference>
<reference key="2">
    <citation type="submission" date="1998-09" db="EMBL/GenBank/DDBJ databases">
        <title>S. pombe ribosomal protein S16 homolog.</title>
        <authorList>
            <person name="Kawamukai M."/>
        </authorList>
    </citation>
    <scope>NUCLEOTIDE SEQUENCE [MRNA] OF 3-140</scope>
</reference>
<comment type="function">
    <text evidence="1">Component of the ribosome, a large ribonucleoprotein complex responsible for the synthesis of proteins in the cell. The small ribosomal subunit (SSU) binds messenger RNAs (mRNAs) and translates the encoded message by selecting cognate aminoacyl-transfer RNA (tRNA) molecules. The large subunit (LSU) contains the ribosomal catalytic site termed the peptidyl transferase center (PTC), which catalyzes the formation of peptide bonds, thereby polymerizing the amino acids delivered by tRNAs into a polypeptide chain. The nascent polypeptides leave the ribosome through a tunnel in the LSU and interact with protein factors that function in enzymatic processing, targeting, and the membrane insertion of nascent chains at the exit of the ribosomal tunnel.</text>
</comment>
<comment type="subunit">
    <text evidence="1">Component of the small ribosomal subunit (SSU). Mature yeast ribosomes consist of a small (40S) and a large (60S) subunit. The 40S small subunit contains 1 molecule of ribosomal RNA (18S rRNA) and at least 33 different proteins. The large 60S subunit contains 3 rRNA molecules (25S, 5.8S and 5S rRNA) and at least 46 different proteins.</text>
</comment>
<comment type="subcellular location">
    <subcellularLocation>
        <location evidence="1">Cytoplasm</location>
    </subcellularLocation>
</comment>
<comment type="miscellaneous">
    <text>There are 2 genes for uS9 in S.pombe.</text>
</comment>
<comment type="similarity">
    <text evidence="2">Belongs to the universal ribosomal protein uS9 family.</text>
</comment>
<name>RS16A_SCHPO</name>
<gene>
    <name type="primary">rps1601</name>
    <name type="synonym">rps16</name>
    <name type="synonym">rps16a</name>
    <name type="ORF">SPBC18H10.14</name>
</gene>
<keyword id="KW-0002">3D-structure</keyword>
<keyword id="KW-0963">Cytoplasm</keyword>
<keyword id="KW-1185">Reference proteome</keyword>
<keyword id="KW-0687">Ribonucleoprotein</keyword>
<keyword id="KW-0689">Ribosomal protein</keyword>
<accession>P0CT64</accession>
<accession>O60144</accession>
<accession>Q9URK4</accession>
<organism>
    <name type="scientific">Schizosaccharomyces pombe (strain 972 / ATCC 24843)</name>
    <name type="common">Fission yeast</name>
    <dbReference type="NCBI Taxonomy" id="284812"/>
    <lineage>
        <taxon>Eukaryota</taxon>
        <taxon>Fungi</taxon>
        <taxon>Dikarya</taxon>
        <taxon>Ascomycota</taxon>
        <taxon>Taphrinomycotina</taxon>
        <taxon>Schizosaccharomycetes</taxon>
        <taxon>Schizosaccharomycetales</taxon>
        <taxon>Schizosaccharomycetaceae</taxon>
        <taxon>Schizosaccharomyces</taxon>
    </lineage>
</organism>
<protein>
    <recommendedName>
        <fullName evidence="2">Small ribosomal subunit protein uS9A</fullName>
    </recommendedName>
    <alternativeName>
        <fullName>40S ribosomal protein S16-A</fullName>
    </alternativeName>
</protein>